<name>RSMH_PSEAB</name>
<protein>
    <recommendedName>
        <fullName evidence="1">Ribosomal RNA small subunit methyltransferase H</fullName>
        <ecNumber evidence="1">2.1.1.199</ecNumber>
    </recommendedName>
    <alternativeName>
        <fullName evidence="1">16S rRNA m(4)C1402 methyltransferase</fullName>
    </alternativeName>
    <alternativeName>
        <fullName evidence="1">rRNA (cytosine-N(4)-)-methyltransferase RsmH</fullName>
    </alternativeName>
</protein>
<sequence length="313" mass="34640">MNATYRHITVLLEEAVSALAPREDGCYLDGTFGRGGHSRALLEKLGTGGRLLGFDKDPQAIQTGKALAAEDGRFVIVQRSFAELGDEVRARGLEGRVDGVLLDLGVSSPQLDDPERGFSFLNDGPLDMRMNPGQGISAAEFIANATEEEIARVFKVYGEERFAKRMARAIVQRRQERPFERTADLAEVITVANPAWEKGKNPATRAFQGLRIHVNNELGDLERGLDAALESLAVGGRLVVISFHSLEDRIVKLFMRKHAKGEADNLPRDLPIRSKVFEPRLKLLGKPQYASEEELKANPRSRSAVMRVAEKLR</sequence>
<feature type="chain" id="PRO_0000387051" description="Ribosomal RNA small subunit methyltransferase H">
    <location>
        <begin position="1"/>
        <end position="313"/>
    </location>
</feature>
<feature type="binding site" evidence="1">
    <location>
        <begin position="35"/>
        <end position="37"/>
    </location>
    <ligand>
        <name>S-adenosyl-L-methionine</name>
        <dbReference type="ChEBI" id="CHEBI:59789"/>
    </ligand>
</feature>
<feature type="binding site" evidence="1">
    <location>
        <position position="55"/>
    </location>
    <ligand>
        <name>S-adenosyl-L-methionine</name>
        <dbReference type="ChEBI" id="CHEBI:59789"/>
    </ligand>
</feature>
<feature type="binding site" evidence="1">
    <location>
        <position position="81"/>
    </location>
    <ligand>
        <name>S-adenosyl-L-methionine</name>
        <dbReference type="ChEBI" id="CHEBI:59789"/>
    </ligand>
</feature>
<feature type="binding site" evidence="1">
    <location>
        <position position="103"/>
    </location>
    <ligand>
        <name>S-adenosyl-L-methionine</name>
        <dbReference type="ChEBI" id="CHEBI:59789"/>
    </ligand>
</feature>
<feature type="binding site" evidence="1">
    <location>
        <position position="110"/>
    </location>
    <ligand>
        <name>S-adenosyl-L-methionine</name>
        <dbReference type="ChEBI" id="CHEBI:59789"/>
    </ligand>
</feature>
<dbReference type="EC" id="2.1.1.199" evidence="1"/>
<dbReference type="EMBL" id="CP000438">
    <property type="protein sequence ID" value="ABJ13689.1"/>
    <property type="molecule type" value="Genomic_DNA"/>
</dbReference>
<dbReference type="RefSeq" id="WP_003141279.1">
    <property type="nucleotide sequence ID" value="NZ_CP034244.1"/>
</dbReference>
<dbReference type="SMR" id="Q02H20"/>
<dbReference type="KEGG" id="pau:PA14_57450"/>
<dbReference type="PseudoCAP" id="PA14_57450"/>
<dbReference type="HOGENOM" id="CLU_038422_2_0_6"/>
<dbReference type="BioCyc" id="PAER208963:G1G74-4837-MONOMER"/>
<dbReference type="Proteomes" id="UP000000653">
    <property type="component" value="Chromosome"/>
</dbReference>
<dbReference type="GO" id="GO:0005737">
    <property type="term" value="C:cytoplasm"/>
    <property type="evidence" value="ECO:0007669"/>
    <property type="project" value="UniProtKB-SubCell"/>
</dbReference>
<dbReference type="GO" id="GO:0071424">
    <property type="term" value="F:rRNA (cytosine-N4-)-methyltransferase activity"/>
    <property type="evidence" value="ECO:0007669"/>
    <property type="project" value="UniProtKB-UniRule"/>
</dbReference>
<dbReference type="GO" id="GO:0070475">
    <property type="term" value="P:rRNA base methylation"/>
    <property type="evidence" value="ECO:0007669"/>
    <property type="project" value="UniProtKB-UniRule"/>
</dbReference>
<dbReference type="FunFam" id="1.10.150.170:FF:000003">
    <property type="entry name" value="Ribosomal RNA small subunit methyltransferase H"/>
    <property type="match status" value="1"/>
</dbReference>
<dbReference type="Gene3D" id="1.10.150.170">
    <property type="entry name" value="Putative methyltransferase TM0872, insert domain"/>
    <property type="match status" value="1"/>
</dbReference>
<dbReference type="Gene3D" id="3.40.50.150">
    <property type="entry name" value="Vaccinia Virus protein VP39"/>
    <property type="match status" value="1"/>
</dbReference>
<dbReference type="HAMAP" id="MF_01007">
    <property type="entry name" value="16SrRNA_methyltr_H"/>
    <property type="match status" value="1"/>
</dbReference>
<dbReference type="InterPro" id="IPR002903">
    <property type="entry name" value="RsmH"/>
</dbReference>
<dbReference type="InterPro" id="IPR023397">
    <property type="entry name" value="SAM-dep_MeTrfase_MraW_recog"/>
</dbReference>
<dbReference type="InterPro" id="IPR029063">
    <property type="entry name" value="SAM-dependent_MTases_sf"/>
</dbReference>
<dbReference type="NCBIfam" id="TIGR00006">
    <property type="entry name" value="16S rRNA (cytosine(1402)-N(4))-methyltransferase RsmH"/>
    <property type="match status" value="1"/>
</dbReference>
<dbReference type="PANTHER" id="PTHR11265:SF0">
    <property type="entry name" value="12S RRNA N4-METHYLCYTIDINE METHYLTRANSFERASE"/>
    <property type="match status" value="1"/>
</dbReference>
<dbReference type="PANTHER" id="PTHR11265">
    <property type="entry name" value="S-ADENOSYL-METHYLTRANSFERASE MRAW"/>
    <property type="match status" value="1"/>
</dbReference>
<dbReference type="Pfam" id="PF01795">
    <property type="entry name" value="Methyltransf_5"/>
    <property type="match status" value="1"/>
</dbReference>
<dbReference type="PIRSF" id="PIRSF004486">
    <property type="entry name" value="MraW"/>
    <property type="match status" value="1"/>
</dbReference>
<dbReference type="SUPFAM" id="SSF81799">
    <property type="entry name" value="Putative methyltransferase TM0872, insert domain"/>
    <property type="match status" value="1"/>
</dbReference>
<dbReference type="SUPFAM" id="SSF53335">
    <property type="entry name" value="S-adenosyl-L-methionine-dependent methyltransferases"/>
    <property type="match status" value="1"/>
</dbReference>
<accession>Q02H20</accession>
<reference key="1">
    <citation type="journal article" date="2006" name="Genome Biol.">
        <title>Genomic analysis reveals that Pseudomonas aeruginosa virulence is combinatorial.</title>
        <authorList>
            <person name="Lee D.G."/>
            <person name="Urbach J.M."/>
            <person name="Wu G."/>
            <person name="Liberati N.T."/>
            <person name="Feinbaum R.L."/>
            <person name="Miyata S."/>
            <person name="Diggins L.T."/>
            <person name="He J."/>
            <person name="Saucier M."/>
            <person name="Deziel E."/>
            <person name="Friedman L."/>
            <person name="Li L."/>
            <person name="Grills G."/>
            <person name="Montgomery K."/>
            <person name="Kucherlapati R."/>
            <person name="Rahme L.G."/>
            <person name="Ausubel F.M."/>
        </authorList>
    </citation>
    <scope>NUCLEOTIDE SEQUENCE [LARGE SCALE GENOMIC DNA]</scope>
    <source>
        <strain>UCBPP-PA14</strain>
    </source>
</reference>
<organism>
    <name type="scientific">Pseudomonas aeruginosa (strain UCBPP-PA14)</name>
    <dbReference type="NCBI Taxonomy" id="208963"/>
    <lineage>
        <taxon>Bacteria</taxon>
        <taxon>Pseudomonadati</taxon>
        <taxon>Pseudomonadota</taxon>
        <taxon>Gammaproteobacteria</taxon>
        <taxon>Pseudomonadales</taxon>
        <taxon>Pseudomonadaceae</taxon>
        <taxon>Pseudomonas</taxon>
    </lineage>
</organism>
<proteinExistence type="inferred from homology"/>
<gene>
    <name evidence="1" type="primary">rsmH</name>
    <name type="synonym">mraW</name>
    <name type="ordered locus">PA14_57450</name>
</gene>
<evidence type="ECO:0000255" key="1">
    <source>
        <dbReference type="HAMAP-Rule" id="MF_01007"/>
    </source>
</evidence>
<comment type="function">
    <text evidence="1">Specifically methylates the N4 position of cytidine in position 1402 (C1402) of 16S rRNA.</text>
</comment>
<comment type="catalytic activity">
    <reaction evidence="1">
        <text>cytidine(1402) in 16S rRNA + S-adenosyl-L-methionine = N(4)-methylcytidine(1402) in 16S rRNA + S-adenosyl-L-homocysteine + H(+)</text>
        <dbReference type="Rhea" id="RHEA:42928"/>
        <dbReference type="Rhea" id="RHEA-COMP:10286"/>
        <dbReference type="Rhea" id="RHEA-COMP:10287"/>
        <dbReference type="ChEBI" id="CHEBI:15378"/>
        <dbReference type="ChEBI" id="CHEBI:57856"/>
        <dbReference type="ChEBI" id="CHEBI:59789"/>
        <dbReference type="ChEBI" id="CHEBI:74506"/>
        <dbReference type="ChEBI" id="CHEBI:82748"/>
        <dbReference type="EC" id="2.1.1.199"/>
    </reaction>
</comment>
<comment type="subcellular location">
    <subcellularLocation>
        <location evidence="1">Cytoplasm</location>
    </subcellularLocation>
</comment>
<comment type="similarity">
    <text evidence="1">Belongs to the methyltransferase superfamily. RsmH family.</text>
</comment>
<keyword id="KW-0963">Cytoplasm</keyword>
<keyword id="KW-0489">Methyltransferase</keyword>
<keyword id="KW-0698">rRNA processing</keyword>
<keyword id="KW-0949">S-adenosyl-L-methionine</keyword>
<keyword id="KW-0808">Transferase</keyword>